<protein>
    <recommendedName>
        <fullName>Anthocyanidin 3-O-glucosyltransferase 1</fullName>
        <shortName evidence="5">FaGT1</shortName>
        <ecNumber evidence="4">2.4.1.115</ecNumber>
    </recommendedName>
    <alternativeName>
        <fullName evidence="6">Flavonol 3-O-glucosyltransferase</fullName>
        <ecNumber evidence="4">2.4.1.91</ecNumber>
    </alternativeName>
</protein>
<keyword id="KW-0328">Glycosyltransferase</keyword>
<keyword id="KW-0808">Transferase</keyword>
<gene>
    <name evidence="5" type="primary">GT1</name>
</gene>
<organism>
    <name type="scientific">Fragaria ananassa</name>
    <name type="common">Strawberry</name>
    <name type="synonym">Fragaria chiloensis x Fragaria virginiana</name>
    <dbReference type="NCBI Taxonomy" id="3747"/>
    <lineage>
        <taxon>Eukaryota</taxon>
        <taxon>Viridiplantae</taxon>
        <taxon>Streptophyta</taxon>
        <taxon>Embryophyta</taxon>
        <taxon>Tracheophyta</taxon>
        <taxon>Spermatophyta</taxon>
        <taxon>Magnoliopsida</taxon>
        <taxon>eudicotyledons</taxon>
        <taxon>Gunneridae</taxon>
        <taxon>Pentapetalae</taxon>
        <taxon>rosids</taxon>
        <taxon>fabids</taxon>
        <taxon>Rosales</taxon>
        <taxon>Rosaceae</taxon>
        <taxon>Rosoideae</taxon>
        <taxon>Potentilleae</taxon>
        <taxon>Fragariinae</taxon>
        <taxon>Fragaria</taxon>
    </lineage>
</organism>
<proteinExistence type="evidence at protein level"/>
<comment type="function">
    <text evidence="4 7">In the presence of other necessary color factors, this glycosylation reaction allows the accumulation of anthocyanin pigments (Probable). Uses UDP-Glc as a sugar donor, but not UDP-Gal or UDP-GlcUA (PubMed:18258692). Anthocyanidins are the preferred substrates in vivo, but flavonols can also be glucosylated in vitro (PubMed:18258692).</text>
</comment>
<comment type="catalytic activity">
    <reaction evidence="4">
        <text>an anthocyanidin + UDP-alpha-D-glucose + H(+) = an anthocyanidin 3-O-beta-D-glucoside + UDP</text>
        <dbReference type="Rhea" id="RHEA:20093"/>
        <dbReference type="ChEBI" id="CHEBI:15378"/>
        <dbReference type="ChEBI" id="CHEBI:16307"/>
        <dbReference type="ChEBI" id="CHEBI:58223"/>
        <dbReference type="ChEBI" id="CHEBI:58885"/>
        <dbReference type="ChEBI" id="CHEBI:143576"/>
        <dbReference type="EC" id="2.4.1.115"/>
    </reaction>
    <physiologicalReaction direction="left-to-right" evidence="4">
        <dbReference type="Rhea" id="RHEA:20094"/>
    </physiologicalReaction>
</comment>
<comment type="catalytic activity">
    <reaction evidence="4">
        <text>cyanidin + UDP-alpha-D-glucose = cyanidin 3-O-beta-D-glucoside + UDP + H(+)</text>
        <dbReference type="Rhea" id="RHEA:60100"/>
        <dbReference type="ChEBI" id="CHEBI:15378"/>
        <dbReference type="ChEBI" id="CHEBI:58223"/>
        <dbReference type="ChEBI" id="CHEBI:58885"/>
        <dbReference type="ChEBI" id="CHEBI:71682"/>
        <dbReference type="ChEBI" id="CHEBI:77857"/>
        <dbReference type="EC" id="2.4.1.115"/>
    </reaction>
    <physiologicalReaction direction="left-to-right" evidence="4">
        <dbReference type="Rhea" id="RHEA:60101"/>
    </physiologicalReaction>
</comment>
<comment type="catalytic activity">
    <reaction evidence="4">
        <text>pelargonidin + UDP-alpha-D-glucose = pelargonidin 3-O-beta-D-glucoside + UDP</text>
        <dbReference type="Rhea" id="RHEA:61504"/>
        <dbReference type="ChEBI" id="CHEBI:58223"/>
        <dbReference type="ChEBI" id="CHEBI:58885"/>
        <dbReference type="ChEBI" id="CHEBI:144777"/>
        <dbReference type="ChEBI" id="CHEBI:144778"/>
        <dbReference type="EC" id="2.4.1.115"/>
    </reaction>
    <physiologicalReaction direction="left-to-right" evidence="4">
        <dbReference type="Rhea" id="RHEA:61505"/>
    </physiologicalReaction>
</comment>
<comment type="catalytic activity">
    <reaction evidence="4">
        <text>peonidin + UDP-alpha-D-glucose = peonidin 3-O-beta-D-glucoside + UDP</text>
        <dbReference type="Rhea" id="RHEA:61508"/>
        <dbReference type="ChEBI" id="CHEBI:58223"/>
        <dbReference type="ChEBI" id="CHEBI:58885"/>
        <dbReference type="ChEBI" id="CHEBI:144779"/>
        <dbReference type="ChEBI" id="CHEBI:144780"/>
        <dbReference type="EC" id="2.4.1.115"/>
    </reaction>
    <physiologicalReaction direction="left-to-right" evidence="4">
        <dbReference type="Rhea" id="RHEA:61509"/>
    </physiologicalReaction>
</comment>
<comment type="catalytic activity">
    <reaction evidence="4">
        <text>delphinidin + UDP-alpha-D-glucose = delphinidin 3-O-beta-D-glucoside + UDP</text>
        <dbReference type="Rhea" id="RHEA:61500"/>
        <dbReference type="ChEBI" id="CHEBI:58223"/>
        <dbReference type="ChEBI" id="CHEBI:58885"/>
        <dbReference type="ChEBI" id="CHEBI:144775"/>
        <dbReference type="ChEBI" id="CHEBI:144776"/>
        <dbReference type="EC" id="2.4.1.115"/>
    </reaction>
    <physiologicalReaction direction="left-to-right" evidence="4">
        <dbReference type="Rhea" id="RHEA:61501"/>
    </physiologicalReaction>
</comment>
<comment type="catalytic activity">
    <reaction evidence="4">
        <text>a flavonol + UDP-alpha-D-glucose = a flavonol 3-O-beta-D-glucoside + UDP + H(+)</text>
        <dbReference type="Rhea" id="RHEA:22300"/>
        <dbReference type="ChEBI" id="CHEBI:15378"/>
        <dbReference type="ChEBI" id="CHEBI:16816"/>
        <dbReference type="ChEBI" id="CHEBI:28802"/>
        <dbReference type="ChEBI" id="CHEBI:58223"/>
        <dbReference type="ChEBI" id="CHEBI:58885"/>
        <dbReference type="EC" id="2.4.1.91"/>
    </reaction>
    <physiologicalReaction direction="left-to-right" evidence="4">
        <dbReference type="Rhea" id="RHEA:22301"/>
    </physiologicalReaction>
</comment>
<comment type="biophysicochemical properties">
    <kinetics>
        <KM evidence="4">30 uM for pelargonidin</KM>
        <KM evidence="4">1.1 mM for UDP-glucose</KM>
        <Vmax evidence="4">21.0 nmol/sec/mg enzyme with pelargonidin as substrate</Vmax>
        <Vmax evidence="4">73.0 nmol/sec/mg enzyme with UDP-glucose as substrate</Vmax>
        <text evidence="4">The kinetic constants are determined for the recombinant His(6)-tagged protein.</text>
    </kinetics>
    <phDependence>
        <text evidence="4">Optimum pH is 7-8 with pelargonidin and cyanidin as substrates.</text>
    </phDependence>
    <temperatureDependence>
        <text evidence="4">Optimum temperature is 30 degrees Celsius with pelargonidin and cyanidin as substrates.</text>
    </temperatureDependence>
</comment>
<comment type="pathway">
    <text evidence="4">Pigment biosynthesis; anthocyanin biosynthesis.</text>
</comment>
<comment type="tissue specificity">
    <text evidence="4">Highest expression detected in receptacles and achenes, with very low levels detected in runners, leaves, flowers, crowns and green receptacles.</text>
</comment>
<comment type="developmental stage">
    <text evidence="4">Expression in achenes and receptacles is ripening-related, with highest expression levels detected in fully ripe red receptacles.</text>
</comment>
<comment type="induction">
    <text evidence="4">By de-achening. Down-regulated by synthetic auxin naphthaleneacetic acid (NAA).</text>
</comment>
<comment type="similarity">
    <text evidence="3">Belongs to the UDP-glycosyltransferase family.</text>
</comment>
<dbReference type="EC" id="2.4.1.115" evidence="4"/>
<dbReference type="EC" id="2.4.1.91" evidence="4"/>
<dbReference type="EMBL" id="AY663784">
    <property type="protein sequence ID" value="AAU09442.1"/>
    <property type="molecule type" value="mRNA"/>
</dbReference>
<dbReference type="SMR" id="Q66PF5"/>
<dbReference type="CAZy" id="GT1">
    <property type="family name" value="Glycosyltransferase Family 1"/>
</dbReference>
<dbReference type="UniPathway" id="UPA00009"/>
<dbReference type="GO" id="GO:0047213">
    <property type="term" value="F:anthocyanidin 3-O-glucosyltransferase activity"/>
    <property type="evidence" value="ECO:0007669"/>
    <property type="project" value="UniProtKB-EC"/>
</dbReference>
<dbReference type="GO" id="GO:0047893">
    <property type="term" value="F:flavonol 3-O-glucosyltransferase activity"/>
    <property type="evidence" value="ECO:0007669"/>
    <property type="project" value="UniProtKB-EC"/>
</dbReference>
<dbReference type="GO" id="GO:0080043">
    <property type="term" value="F:quercetin 3-O-glucosyltransferase activity"/>
    <property type="evidence" value="ECO:0007669"/>
    <property type="project" value="TreeGrafter"/>
</dbReference>
<dbReference type="GO" id="GO:0080044">
    <property type="term" value="F:quercetin 7-O-glucosyltransferase activity"/>
    <property type="evidence" value="ECO:0007669"/>
    <property type="project" value="TreeGrafter"/>
</dbReference>
<dbReference type="GO" id="GO:0009718">
    <property type="term" value="P:anthocyanin-containing compound biosynthetic process"/>
    <property type="evidence" value="ECO:0007669"/>
    <property type="project" value="UniProtKB-UniPathway"/>
</dbReference>
<dbReference type="CDD" id="cd03784">
    <property type="entry name" value="GT1_Gtf-like"/>
    <property type="match status" value="1"/>
</dbReference>
<dbReference type="FunFam" id="3.40.50.2000:FF:000091">
    <property type="entry name" value="Glycosyltransferase"/>
    <property type="match status" value="1"/>
</dbReference>
<dbReference type="FunFam" id="3.40.50.2000:FF:000129">
    <property type="entry name" value="Glycosyltransferase"/>
    <property type="match status" value="1"/>
</dbReference>
<dbReference type="Gene3D" id="3.40.50.2000">
    <property type="entry name" value="Glycogen Phosphorylase B"/>
    <property type="match status" value="2"/>
</dbReference>
<dbReference type="InterPro" id="IPR002213">
    <property type="entry name" value="UDP_glucos_trans"/>
</dbReference>
<dbReference type="InterPro" id="IPR035595">
    <property type="entry name" value="UDP_glycos_trans_CS"/>
</dbReference>
<dbReference type="PANTHER" id="PTHR11926">
    <property type="entry name" value="GLUCOSYL/GLUCURONOSYL TRANSFERASES"/>
    <property type="match status" value="1"/>
</dbReference>
<dbReference type="PANTHER" id="PTHR11926:SF1560">
    <property type="entry name" value="UDP-GLYCOSYLTRANSFERASE 74E1-RELATED"/>
    <property type="match status" value="1"/>
</dbReference>
<dbReference type="Pfam" id="PF00201">
    <property type="entry name" value="UDPGT"/>
    <property type="match status" value="1"/>
</dbReference>
<dbReference type="SUPFAM" id="SSF53756">
    <property type="entry name" value="UDP-Glycosyltransferase/glycogen phosphorylase"/>
    <property type="match status" value="1"/>
</dbReference>
<dbReference type="PROSITE" id="PS00375">
    <property type="entry name" value="UDPGT"/>
    <property type="match status" value="1"/>
</dbReference>
<sequence>MAPVSNQVGGHVAVLAFPFSTHAAPLLNIVCRLAAAAPSTLFSFFNTKQSNSSILAGNTSVLRYSNVSVCEVADGVPEGYVFVGKPQEDIELFMKAAPDNFRRCLEASVAESGREVSCLVTDAFFWFGVHMADDMGGVPWVPFWTAGPASLSAHVHTDLIRSTTSGGCHDEKETITVIAGMSKVRPQDLPEGIIFGNLESLFSRMLHQMGQMPPLATAVFINSFEELDPVITNDLKSKFKRFLNVGPLDLLEPPASAATTTPQTAAEAVAGDGCLSWLDEQKVASVVYVSFGSVTRPSPEELMALAEALEASRVPFLWSLRDNLKNRQLDEFLSKGKLNGMVVPWAPQPQVLAHGSVGAFVTHCGWNSVLESVAGGVPLICRPFFGDQKLNARMVEDVWKIGLRLEGGVFTKNGMLKSLDMLLSQDKGTKMKNKINTLKQFAKQAVEPKGSSARNFESLLEMTTTN</sequence>
<accession>Q66PF5</accession>
<evidence type="ECO:0000250" key="1">
    <source>
        <dbReference type="UniProtKB" id="A0A0A1HA03"/>
    </source>
</evidence>
<evidence type="ECO:0000250" key="2">
    <source>
        <dbReference type="UniProtKB" id="P51094"/>
    </source>
</evidence>
<evidence type="ECO:0000255" key="3"/>
<evidence type="ECO:0000269" key="4">
    <source>
    </source>
</evidence>
<evidence type="ECO:0000303" key="5">
    <source>
    </source>
</evidence>
<evidence type="ECO:0000305" key="6"/>
<evidence type="ECO:0000305" key="7">
    <source>
    </source>
</evidence>
<evidence type="ECO:0000312" key="8">
    <source>
        <dbReference type="EMBL" id="AAU09442.1"/>
    </source>
</evidence>
<reference key="1">
    <citation type="journal article" date="2006" name="Plant Physiol.">
        <title>Cinnamate metabolism in ripening fruit. Characterization of a UDP-glucose:cinnamate glucosyltransferase from strawberry.</title>
        <authorList>
            <person name="Lunkenbein S."/>
            <person name="Bellido M."/>
            <person name="Aharoni A."/>
            <person name="Salentijn E.M."/>
            <person name="Kaldenhoff R."/>
            <person name="Coiner H.A."/>
            <person name="Munoz-Blanco J."/>
            <person name="Schwab W."/>
        </authorList>
    </citation>
    <scope>NUCLEOTIDE SEQUENCE [MRNA]</scope>
    <source>
        <strain evidence="8">cv. Elsanta</strain>
    </source>
</reference>
<reference key="2">
    <citation type="journal article" date="2008" name="Plant Physiol.">
        <title>Redirection of flavonoid biosynthesis through the down-regulation of an anthocyanidin glucosyltransferase in ripening strawberry fruit.</title>
        <authorList>
            <person name="Griesser M."/>
            <person name="Hoffmann T."/>
            <person name="Bellido M.L."/>
            <person name="Rosati C."/>
            <person name="Fink B."/>
            <person name="Kurtzer R."/>
            <person name="Aharoni A."/>
            <person name="Munoz-Blanco J."/>
            <person name="Schwab W."/>
        </authorList>
    </citation>
    <scope>NUCLEOTIDE SEQUENCE [MRNA]</scope>
    <scope>FUNCTION</scope>
    <scope>CATALYTIC ACTIVITY</scope>
    <scope>BIOPHYSICOCHEMICAL PROPERTIES</scope>
    <scope>TISSUE SPECIFICITY</scope>
    <scope>DEVELOPMENTAL STAGE</scope>
    <scope>INDUCTION</scope>
    <source>
        <strain evidence="4">cv. Elsanta</strain>
        <tissue evidence="4">Leaf</tissue>
    </source>
</reference>
<name>UFOG1_FRAAN</name>
<feature type="chain" id="PRO_0000413766" description="Anthocyanidin 3-O-glucosyltransferase 1">
    <location>
        <begin position="1"/>
        <end position="466"/>
    </location>
</feature>
<feature type="active site" description="Proton acceptor" evidence="1">
    <location>
        <position position="22"/>
    </location>
</feature>
<feature type="active site" description="Charge relay" evidence="1">
    <location>
        <position position="122"/>
    </location>
</feature>
<feature type="binding site" evidence="2">
    <location>
        <position position="22"/>
    </location>
    <ligand>
        <name>an anthocyanidin</name>
        <dbReference type="ChEBI" id="CHEBI:143576"/>
    </ligand>
</feature>
<feature type="binding site" evidence="2">
    <location>
        <position position="87"/>
    </location>
    <ligand>
        <name>an anthocyanidin</name>
        <dbReference type="ChEBI" id="CHEBI:143576"/>
    </ligand>
</feature>
<feature type="binding site" evidence="1">
    <location>
        <position position="145"/>
    </location>
    <ligand>
        <name>UDP-alpha-D-glucose</name>
        <dbReference type="ChEBI" id="CHEBI:58885"/>
    </ligand>
</feature>
<feature type="binding site" evidence="2">
    <location>
        <position position="154"/>
    </location>
    <ligand>
        <name>an anthocyanidin</name>
        <dbReference type="ChEBI" id="CHEBI:143576"/>
    </ligand>
</feature>
<feature type="binding site" evidence="1">
    <location>
        <position position="346"/>
    </location>
    <ligand>
        <name>UDP-alpha-D-glucose</name>
        <dbReference type="ChEBI" id="CHEBI:58885"/>
    </ligand>
</feature>
<feature type="binding site" evidence="1">
    <location>
        <position position="348"/>
    </location>
    <ligand>
        <name>UDP-alpha-D-glucose</name>
        <dbReference type="ChEBI" id="CHEBI:58885"/>
    </ligand>
</feature>
<feature type="binding site" evidence="1">
    <location>
        <position position="363"/>
    </location>
    <ligand>
        <name>UDP-alpha-D-glucose</name>
        <dbReference type="ChEBI" id="CHEBI:58885"/>
    </ligand>
</feature>
<feature type="binding site" evidence="1">
    <location>
        <position position="366"/>
    </location>
    <ligand>
        <name>UDP-alpha-D-glucose</name>
        <dbReference type="ChEBI" id="CHEBI:58885"/>
    </ligand>
</feature>
<feature type="binding site" evidence="1">
    <location>
        <position position="367"/>
    </location>
    <ligand>
        <name>UDP-alpha-D-glucose</name>
        <dbReference type="ChEBI" id="CHEBI:58885"/>
    </ligand>
</feature>
<feature type="binding site" evidence="1">
    <location>
        <position position="368"/>
    </location>
    <ligand>
        <name>UDP-alpha-D-glucose</name>
        <dbReference type="ChEBI" id="CHEBI:58885"/>
    </ligand>
</feature>
<feature type="binding site" evidence="1">
    <location>
        <position position="371"/>
    </location>
    <ligand>
        <name>UDP-alpha-D-glucose</name>
        <dbReference type="ChEBI" id="CHEBI:58885"/>
    </ligand>
</feature>
<feature type="binding site" evidence="2">
    <location>
        <position position="386"/>
    </location>
    <ligand>
        <name>an anthocyanidin</name>
        <dbReference type="ChEBI" id="CHEBI:143576"/>
    </ligand>
</feature>
<feature type="binding site" evidence="1">
    <location>
        <position position="387"/>
    </location>
    <ligand>
        <name>UDP-alpha-D-glucose</name>
        <dbReference type="ChEBI" id="CHEBI:58885"/>
    </ligand>
</feature>
<feature type="binding site" evidence="1">
    <location>
        <position position="388"/>
    </location>
    <ligand>
        <name>UDP-alpha-D-glucose</name>
        <dbReference type="ChEBI" id="CHEBI:58885"/>
    </ligand>
</feature>